<reference key="1">
    <citation type="submission" date="2006-12" db="EMBL/GenBank/DDBJ databases">
        <title>Bifidobacterium adolescentis complete genome sequence.</title>
        <authorList>
            <person name="Suzuki T."/>
            <person name="Tsuda Y."/>
            <person name="Kanou N."/>
            <person name="Inoue T."/>
            <person name="Kumazaki K."/>
            <person name="Nagano S."/>
            <person name="Hirai S."/>
            <person name="Tanaka K."/>
            <person name="Watanabe K."/>
        </authorList>
    </citation>
    <scope>NUCLEOTIDE SEQUENCE [LARGE SCALE GENOMIC DNA]</scope>
    <source>
        <strain>ATCC 15703 / DSM 20083 / NCTC 11814 / E194a</strain>
    </source>
</reference>
<accession>A1A280</accession>
<proteinExistence type="inferred from homology"/>
<keyword id="KW-0004">4Fe-4S</keyword>
<keyword id="KW-0963">Cytoplasm</keyword>
<keyword id="KW-0408">Iron</keyword>
<keyword id="KW-0411">Iron-sulfur</keyword>
<keyword id="KW-0479">Metal-binding</keyword>
<keyword id="KW-1185">Reference proteome</keyword>
<keyword id="KW-0949">S-adenosyl-L-methionine</keyword>
<keyword id="KW-0808">Transferase</keyword>
<keyword id="KW-0819">tRNA processing</keyword>
<sequence length="480" mass="53083">MMTEAERASKLAEPAANDTPTRGKGVFYVHTLGCQMNVHDSERIAGVLEADGYVPATEEQYLNHDIDLIVMNTCAVRENAAERMYGTIGLWAELKRERPNLQIAVGGCMAQLDREKIAKKAPWVDAVFGTKNIGSLPQLLDQARIEGHAQVKVQEELNYFPSQLPTDRASKVSSWVAISVGCNNTCTFCIVPTTRGKEHDRRPGDILAEIRQCVDEGAKEVTLLGQNVNSFGYGIGDRFAFSKLLRACGEIDGLERVRFTSPHPAAFTDDVIAAMAETPNVMHQLHFPLQSGSDRILRAMRRSYRSAKFLDILRKIREAMPDAQISTDIIVGFPGETEEDFQETLRVVEEARFASAFTFIYSPRPGTPAAEMEQVPHDVVQDRFERLVALQERITEENLKTFEGRDVEVMVTGASGKKDAATHRVTGREKTGVLVHVGVPEGEPMPQVGDFVTATVTHAGRHNLIADPNPEAGQTYAVRH</sequence>
<evidence type="ECO:0000255" key="1">
    <source>
        <dbReference type="HAMAP-Rule" id="MF_01864"/>
    </source>
</evidence>
<evidence type="ECO:0000255" key="2">
    <source>
        <dbReference type="PROSITE-ProRule" id="PRU01266"/>
    </source>
</evidence>
<feature type="chain" id="PRO_0000374151" description="tRNA-2-methylthio-N(6)-dimethylallyladenosine synthase">
    <location>
        <begin position="1"/>
        <end position="480"/>
    </location>
</feature>
<feature type="domain" description="MTTase N-terminal" evidence="1">
    <location>
        <begin position="25"/>
        <end position="145"/>
    </location>
</feature>
<feature type="domain" description="Radical SAM core" evidence="2">
    <location>
        <begin position="168"/>
        <end position="397"/>
    </location>
</feature>
<feature type="domain" description="TRAM" evidence="1">
    <location>
        <begin position="400"/>
        <end position="470"/>
    </location>
</feature>
<feature type="binding site" evidence="1">
    <location>
        <position position="34"/>
    </location>
    <ligand>
        <name>[4Fe-4S] cluster</name>
        <dbReference type="ChEBI" id="CHEBI:49883"/>
        <label>1</label>
    </ligand>
</feature>
<feature type="binding site" evidence="1">
    <location>
        <position position="74"/>
    </location>
    <ligand>
        <name>[4Fe-4S] cluster</name>
        <dbReference type="ChEBI" id="CHEBI:49883"/>
        <label>1</label>
    </ligand>
</feature>
<feature type="binding site" evidence="1">
    <location>
        <position position="108"/>
    </location>
    <ligand>
        <name>[4Fe-4S] cluster</name>
        <dbReference type="ChEBI" id="CHEBI:49883"/>
        <label>1</label>
    </ligand>
</feature>
<feature type="binding site" evidence="1">
    <location>
        <position position="182"/>
    </location>
    <ligand>
        <name>[4Fe-4S] cluster</name>
        <dbReference type="ChEBI" id="CHEBI:49883"/>
        <label>2</label>
        <note>4Fe-4S-S-AdoMet</note>
    </ligand>
</feature>
<feature type="binding site" evidence="1">
    <location>
        <position position="186"/>
    </location>
    <ligand>
        <name>[4Fe-4S] cluster</name>
        <dbReference type="ChEBI" id="CHEBI:49883"/>
        <label>2</label>
        <note>4Fe-4S-S-AdoMet</note>
    </ligand>
</feature>
<feature type="binding site" evidence="1">
    <location>
        <position position="189"/>
    </location>
    <ligand>
        <name>[4Fe-4S] cluster</name>
        <dbReference type="ChEBI" id="CHEBI:49883"/>
        <label>2</label>
        <note>4Fe-4S-S-AdoMet</note>
    </ligand>
</feature>
<name>MIAB_BIFAA</name>
<protein>
    <recommendedName>
        <fullName evidence="1">tRNA-2-methylthio-N(6)-dimethylallyladenosine synthase</fullName>
        <ecNumber evidence="1">2.8.4.3</ecNumber>
    </recommendedName>
    <alternativeName>
        <fullName evidence="1">(Dimethylallyl)adenosine tRNA methylthiotransferase MiaB</fullName>
    </alternativeName>
    <alternativeName>
        <fullName evidence="1">tRNA-i(6)A37 methylthiotransferase</fullName>
    </alternativeName>
</protein>
<gene>
    <name evidence="1" type="primary">miaB</name>
    <name type="ordered locus">BAD_1032</name>
</gene>
<dbReference type="EC" id="2.8.4.3" evidence="1"/>
<dbReference type="EMBL" id="AP009256">
    <property type="protein sequence ID" value="BAF39813.1"/>
    <property type="molecule type" value="Genomic_DNA"/>
</dbReference>
<dbReference type="SMR" id="A1A280"/>
<dbReference type="STRING" id="367928.BAD_1032"/>
<dbReference type="PaxDb" id="1680-BADO_1083"/>
<dbReference type="KEGG" id="bad:BAD_1032"/>
<dbReference type="HOGENOM" id="CLU_018697_2_2_11"/>
<dbReference type="Proteomes" id="UP000008702">
    <property type="component" value="Chromosome"/>
</dbReference>
<dbReference type="GO" id="GO:0005829">
    <property type="term" value="C:cytosol"/>
    <property type="evidence" value="ECO:0007669"/>
    <property type="project" value="TreeGrafter"/>
</dbReference>
<dbReference type="GO" id="GO:0051539">
    <property type="term" value="F:4 iron, 4 sulfur cluster binding"/>
    <property type="evidence" value="ECO:0007669"/>
    <property type="project" value="UniProtKB-UniRule"/>
</dbReference>
<dbReference type="GO" id="GO:0046872">
    <property type="term" value="F:metal ion binding"/>
    <property type="evidence" value="ECO:0007669"/>
    <property type="project" value="UniProtKB-KW"/>
</dbReference>
<dbReference type="GO" id="GO:0035597">
    <property type="term" value="F:N6-isopentenyladenosine methylthiotransferase activity"/>
    <property type="evidence" value="ECO:0007669"/>
    <property type="project" value="TreeGrafter"/>
</dbReference>
<dbReference type="CDD" id="cd01335">
    <property type="entry name" value="Radical_SAM"/>
    <property type="match status" value="1"/>
</dbReference>
<dbReference type="FunFam" id="3.40.50.12160:FF:000003">
    <property type="entry name" value="CDK5 regulatory subunit-associated protein 1"/>
    <property type="match status" value="1"/>
</dbReference>
<dbReference type="FunFam" id="3.80.30.20:FF:000001">
    <property type="entry name" value="tRNA-2-methylthio-N(6)-dimethylallyladenosine synthase 2"/>
    <property type="match status" value="1"/>
</dbReference>
<dbReference type="Gene3D" id="3.40.50.12160">
    <property type="entry name" value="Methylthiotransferase, N-terminal domain"/>
    <property type="match status" value="1"/>
</dbReference>
<dbReference type="Gene3D" id="3.80.30.20">
    <property type="entry name" value="tm_1862 like domain"/>
    <property type="match status" value="1"/>
</dbReference>
<dbReference type="HAMAP" id="MF_01864">
    <property type="entry name" value="tRNA_metthiotr_MiaB"/>
    <property type="match status" value="1"/>
</dbReference>
<dbReference type="InterPro" id="IPR006638">
    <property type="entry name" value="Elp3/MiaA/NifB-like_rSAM"/>
</dbReference>
<dbReference type="InterPro" id="IPR005839">
    <property type="entry name" value="Methylthiotransferase"/>
</dbReference>
<dbReference type="InterPro" id="IPR020612">
    <property type="entry name" value="Methylthiotransferase_CS"/>
</dbReference>
<dbReference type="InterPro" id="IPR013848">
    <property type="entry name" value="Methylthiotransferase_N"/>
</dbReference>
<dbReference type="InterPro" id="IPR038135">
    <property type="entry name" value="Methylthiotransferase_N_sf"/>
</dbReference>
<dbReference type="InterPro" id="IPR006463">
    <property type="entry name" value="MiaB_methiolase"/>
</dbReference>
<dbReference type="InterPro" id="IPR007197">
    <property type="entry name" value="rSAM"/>
</dbReference>
<dbReference type="InterPro" id="IPR023404">
    <property type="entry name" value="rSAM_horseshoe"/>
</dbReference>
<dbReference type="InterPro" id="IPR002792">
    <property type="entry name" value="TRAM_dom"/>
</dbReference>
<dbReference type="NCBIfam" id="TIGR01574">
    <property type="entry name" value="miaB-methiolase"/>
    <property type="match status" value="1"/>
</dbReference>
<dbReference type="NCBIfam" id="TIGR00089">
    <property type="entry name" value="MiaB/RimO family radical SAM methylthiotransferase"/>
    <property type="match status" value="1"/>
</dbReference>
<dbReference type="PANTHER" id="PTHR43020">
    <property type="entry name" value="CDK5 REGULATORY SUBUNIT-ASSOCIATED PROTEIN 1"/>
    <property type="match status" value="1"/>
</dbReference>
<dbReference type="PANTHER" id="PTHR43020:SF2">
    <property type="entry name" value="MITOCHONDRIAL TRNA METHYLTHIOTRANSFERASE CDK5RAP1"/>
    <property type="match status" value="1"/>
</dbReference>
<dbReference type="Pfam" id="PF04055">
    <property type="entry name" value="Radical_SAM"/>
    <property type="match status" value="1"/>
</dbReference>
<dbReference type="Pfam" id="PF00919">
    <property type="entry name" value="UPF0004"/>
    <property type="match status" value="1"/>
</dbReference>
<dbReference type="SFLD" id="SFLDF00273">
    <property type="entry name" value="(dimethylallyl)adenosine_tRNA"/>
    <property type="match status" value="1"/>
</dbReference>
<dbReference type="SFLD" id="SFLDG01082">
    <property type="entry name" value="B12-binding_domain_containing"/>
    <property type="match status" value="1"/>
</dbReference>
<dbReference type="SFLD" id="SFLDS00029">
    <property type="entry name" value="Radical_SAM"/>
    <property type="match status" value="1"/>
</dbReference>
<dbReference type="SMART" id="SM00729">
    <property type="entry name" value="Elp3"/>
    <property type="match status" value="1"/>
</dbReference>
<dbReference type="SUPFAM" id="SSF102114">
    <property type="entry name" value="Radical SAM enzymes"/>
    <property type="match status" value="1"/>
</dbReference>
<dbReference type="PROSITE" id="PS51449">
    <property type="entry name" value="MTTASE_N"/>
    <property type="match status" value="1"/>
</dbReference>
<dbReference type="PROSITE" id="PS01278">
    <property type="entry name" value="MTTASE_RADICAL"/>
    <property type="match status" value="1"/>
</dbReference>
<dbReference type="PROSITE" id="PS51918">
    <property type="entry name" value="RADICAL_SAM"/>
    <property type="match status" value="1"/>
</dbReference>
<dbReference type="PROSITE" id="PS50926">
    <property type="entry name" value="TRAM"/>
    <property type="match status" value="1"/>
</dbReference>
<organism>
    <name type="scientific">Bifidobacterium adolescentis (strain ATCC 15703 / DSM 20083 / NCTC 11814 / E194a)</name>
    <dbReference type="NCBI Taxonomy" id="367928"/>
    <lineage>
        <taxon>Bacteria</taxon>
        <taxon>Bacillati</taxon>
        <taxon>Actinomycetota</taxon>
        <taxon>Actinomycetes</taxon>
        <taxon>Bifidobacteriales</taxon>
        <taxon>Bifidobacteriaceae</taxon>
        <taxon>Bifidobacterium</taxon>
    </lineage>
</organism>
<comment type="function">
    <text evidence="1">Catalyzes the methylthiolation of N6-(dimethylallyl)adenosine (i(6)A), leading to the formation of 2-methylthio-N6-(dimethylallyl)adenosine (ms(2)i(6)A) at position 37 in tRNAs that read codons beginning with uridine.</text>
</comment>
<comment type="catalytic activity">
    <reaction evidence="1">
        <text>N(6)-dimethylallyladenosine(37) in tRNA + (sulfur carrier)-SH + AH2 + 2 S-adenosyl-L-methionine = 2-methylsulfanyl-N(6)-dimethylallyladenosine(37) in tRNA + (sulfur carrier)-H + 5'-deoxyadenosine + L-methionine + A + S-adenosyl-L-homocysteine + 2 H(+)</text>
        <dbReference type="Rhea" id="RHEA:37067"/>
        <dbReference type="Rhea" id="RHEA-COMP:10375"/>
        <dbReference type="Rhea" id="RHEA-COMP:10376"/>
        <dbReference type="Rhea" id="RHEA-COMP:14737"/>
        <dbReference type="Rhea" id="RHEA-COMP:14739"/>
        <dbReference type="ChEBI" id="CHEBI:13193"/>
        <dbReference type="ChEBI" id="CHEBI:15378"/>
        <dbReference type="ChEBI" id="CHEBI:17319"/>
        <dbReference type="ChEBI" id="CHEBI:17499"/>
        <dbReference type="ChEBI" id="CHEBI:29917"/>
        <dbReference type="ChEBI" id="CHEBI:57844"/>
        <dbReference type="ChEBI" id="CHEBI:57856"/>
        <dbReference type="ChEBI" id="CHEBI:59789"/>
        <dbReference type="ChEBI" id="CHEBI:64428"/>
        <dbReference type="ChEBI" id="CHEBI:74415"/>
        <dbReference type="ChEBI" id="CHEBI:74417"/>
        <dbReference type="EC" id="2.8.4.3"/>
    </reaction>
</comment>
<comment type="cofactor">
    <cofactor evidence="1">
        <name>[4Fe-4S] cluster</name>
        <dbReference type="ChEBI" id="CHEBI:49883"/>
    </cofactor>
    <text evidence="1">Binds 2 [4Fe-4S] clusters. One cluster is coordinated with 3 cysteines and an exchangeable S-adenosyl-L-methionine.</text>
</comment>
<comment type="subunit">
    <text evidence="1">Monomer.</text>
</comment>
<comment type="subcellular location">
    <subcellularLocation>
        <location evidence="1">Cytoplasm</location>
    </subcellularLocation>
</comment>
<comment type="similarity">
    <text evidence="1">Belongs to the methylthiotransferase family. MiaB subfamily.</text>
</comment>